<evidence type="ECO:0000255" key="1">
    <source>
        <dbReference type="HAMAP-Rule" id="MF_00627"/>
    </source>
</evidence>
<proteinExistence type="inferred from homology"/>
<dbReference type="EC" id="1.1.1.103" evidence="1"/>
<dbReference type="EMBL" id="AM420293">
    <property type="protein sequence ID" value="CAM05559.1"/>
    <property type="molecule type" value="Genomic_DNA"/>
</dbReference>
<dbReference type="RefSeq" id="WP_009945974.1">
    <property type="nucleotide sequence ID" value="NC_009142.1"/>
</dbReference>
<dbReference type="SMR" id="A4FND4"/>
<dbReference type="STRING" id="405948.SACE_6389"/>
<dbReference type="KEGG" id="sen:SACE_6389"/>
<dbReference type="eggNOG" id="COG1063">
    <property type="taxonomic scope" value="Bacteria"/>
</dbReference>
<dbReference type="HOGENOM" id="CLU_026673_11_0_11"/>
<dbReference type="OrthoDB" id="241504at2"/>
<dbReference type="UniPathway" id="UPA00046">
    <property type="reaction ID" value="UER00505"/>
</dbReference>
<dbReference type="Proteomes" id="UP000006728">
    <property type="component" value="Chromosome"/>
</dbReference>
<dbReference type="GO" id="GO:0005737">
    <property type="term" value="C:cytoplasm"/>
    <property type="evidence" value="ECO:0007669"/>
    <property type="project" value="UniProtKB-SubCell"/>
</dbReference>
<dbReference type="GO" id="GO:0008743">
    <property type="term" value="F:L-threonine 3-dehydrogenase activity"/>
    <property type="evidence" value="ECO:0007669"/>
    <property type="project" value="UniProtKB-UniRule"/>
</dbReference>
<dbReference type="GO" id="GO:0008270">
    <property type="term" value="F:zinc ion binding"/>
    <property type="evidence" value="ECO:0007669"/>
    <property type="project" value="UniProtKB-UniRule"/>
</dbReference>
<dbReference type="GO" id="GO:0019518">
    <property type="term" value="P:L-threonine catabolic process to glycine"/>
    <property type="evidence" value="ECO:0007669"/>
    <property type="project" value="UniProtKB-UniPathway"/>
</dbReference>
<dbReference type="Gene3D" id="3.90.180.10">
    <property type="entry name" value="Medium-chain alcohol dehydrogenases, catalytic domain"/>
    <property type="match status" value="1"/>
</dbReference>
<dbReference type="Gene3D" id="3.40.50.720">
    <property type="entry name" value="NAD(P)-binding Rossmann-like Domain"/>
    <property type="match status" value="1"/>
</dbReference>
<dbReference type="HAMAP" id="MF_00627">
    <property type="entry name" value="Thr_dehydrog"/>
    <property type="match status" value="1"/>
</dbReference>
<dbReference type="InterPro" id="IPR013149">
    <property type="entry name" value="ADH-like_C"/>
</dbReference>
<dbReference type="InterPro" id="IPR013154">
    <property type="entry name" value="ADH-like_N"/>
</dbReference>
<dbReference type="InterPro" id="IPR002328">
    <property type="entry name" value="ADH_Zn_CS"/>
</dbReference>
<dbReference type="InterPro" id="IPR011032">
    <property type="entry name" value="GroES-like_sf"/>
</dbReference>
<dbReference type="InterPro" id="IPR004627">
    <property type="entry name" value="L-Threonine_3-DHase"/>
</dbReference>
<dbReference type="InterPro" id="IPR036291">
    <property type="entry name" value="NAD(P)-bd_dom_sf"/>
</dbReference>
<dbReference type="InterPro" id="IPR020843">
    <property type="entry name" value="PKS_ER"/>
</dbReference>
<dbReference type="InterPro" id="IPR050129">
    <property type="entry name" value="Zn_alcohol_dh"/>
</dbReference>
<dbReference type="NCBIfam" id="NF003808">
    <property type="entry name" value="PRK05396.1"/>
    <property type="match status" value="1"/>
</dbReference>
<dbReference type="NCBIfam" id="TIGR00692">
    <property type="entry name" value="tdh"/>
    <property type="match status" value="1"/>
</dbReference>
<dbReference type="PANTHER" id="PTHR43401">
    <property type="entry name" value="L-THREONINE 3-DEHYDROGENASE"/>
    <property type="match status" value="1"/>
</dbReference>
<dbReference type="PANTHER" id="PTHR43401:SF2">
    <property type="entry name" value="L-THREONINE 3-DEHYDROGENASE"/>
    <property type="match status" value="1"/>
</dbReference>
<dbReference type="Pfam" id="PF08240">
    <property type="entry name" value="ADH_N"/>
    <property type="match status" value="1"/>
</dbReference>
<dbReference type="Pfam" id="PF00107">
    <property type="entry name" value="ADH_zinc_N"/>
    <property type="match status" value="1"/>
</dbReference>
<dbReference type="SMART" id="SM00829">
    <property type="entry name" value="PKS_ER"/>
    <property type="match status" value="1"/>
</dbReference>
<dbReference type="SUPFAM" id="SSF50129">
    <property type="entry name" value="GroES-like"/>
    <property type="match status" value="1"/>
</dbReference>
<dbReference type="SUPFAM" id="SSF51735">
    <property type="entry name" value="NAD(P)-binding Rossmann-fold domains"/>
    <property type="match status" value="1"/>
</dbReference>
<dbReference type="PROSITE" id="PS00059">
    <property type="entry name" value="ADH_ZINC"/>
    <property type="match status" value="1"/>
</dbReference>
<organism>
    <name type="scientific">Saccharopolyspora erythraea (strain ATCC 11635 / DSM 40517 / JCM 4748 / NBRC 13426 / NCIMB 8594 / NRRL 2338)</name>
    <dbReference type="NCBI Taxonomy" id="405948"/>
    <lineage>
        <taxon>Bacteria</taxon>
        <taxon>Bacillati</taxon>
        <taxon>Actinomycetota</taxon>
        <taxon>Actinomycetes</taxon>
        <taxon>Pseudonocardiales</taxon>
        <taxon>Pseudonocardiaceae</taxon>
        <taxon>Saccharopolyspora</taxon>
    </lineage>
</organism>
<feature type="chain" id="PRO_1000051650" description="L-threonine 3-dehydrogenase">
    <location>
        <begin position="1"/>
        <end position="343"/>
    </location>
</feature>
<feature type="active site" description="Charge relay system" evidence="1">
    <location>
        <position position="40"/>
    </location>
</feature>
<feature type="active site" description="Charge relay system" evidence="1">
    <location>
        <position position="43"/>
    </location>
</feature>
<feature type="binding site" evidence="1">
    <location>
        <position position="38"/>
    </location>
    <ligand>
        <name>Zn(2+)</name>
        <dbReference type="ChEBI" id="CHEBI:29105"/>
        <label>1</label>
        <note>catalytic</note>
    </ligand>
</feature>
<feature type="binding site" evidence="1">
    <location>
        <position position="63"/>
    </location>
    <ligand>
        <name>Zn(2+)</name>
        <dbReference type="ChEBI" id="CHEBI:29105"/>
        <label>1</label>
        <note>catalytic</note>
    </ligand>
</feature>
<feature type="binding site" evidence="1">
    <location>
        <position position="64"/>
    </location>
    <ligand>
        <name>Zn(2+)</name>
        <dbReference type="ChEBI" id="CHEBI:29105"/>
        <label>1</label>
        <note>catalytic</note>
    </ligand>
</feature>
<feature type="binding site" evidence="1">
    <location>
        <position position="93"/>
    </location>
    <ligand>
        <name>Zn(2+)</name>
        <dbReference type="ChEBI" id="CHEBI:29105"/>
        <label>2</label>
    </ligand>
</feature>
<feature type="binding site" evidence="1">
    <location>
        <position position="96"/>
    </location>
    <ligand>
        <name>Zn(2+)</name>
        <dbReference type="ChEBI" id="CHEBI:29105"/>
        <label>2</label>
    </ligand>
</feature>
<feature type="binding site" evidence="1">
    <location>
        <position position="99"/>
    </location>
    <ligand>
        <name>Zn(2+)</name>
        <dbReference type="ChEBI" id="CHEBI:29105"/>
        <label>2</label>
    </ligand>
</feature>
<feature type="binding site" evidence="1">
    <location>
        <position position="107"/>
    </location>
    <ligand>
        <name>Zn(2+)</name>
        <dbReference type="ChEBI" id="CHEBI:29105"/>
        <label>2</label>
    </ligand>
</feature>
<feature type="binding site" evidence="1">
    <location>
        <position position="175"/>
    </location>
    <ligand>
        <name>NAD(+)</name>
        <dbReference type="ChEBI" id="CHEBI:57540"/>
    </ligand>
</feature>
<feature type="binding site" evidence="1">
    <location>
        <position position="195"/>
    </location>
    <ligand>
        <name>NAD(+)</name>
        <dbReference type="ChEBI" id="CHEBI:57540"/>
    </ligand>
</feature>
<feature type="binding site" evidence="1">
    <location>
        <position position="200"/>
    </location>
    <ligand>
        <name>NAD(+)</name>
        <dbReference type="ChEBI" id="CHEBI:57540"/>
    </ligand>
</feature>
<feature type="binding site" evidence="1">
    <location>
        <begin position="262"/>
        <end position="264"/>
    </location>
    <ligand>
        <name>NAD(+)</name>
        <dbReference type="ChEBI" id="CHEBI:57540"/>
    </ligand>
</feature>
<feature type="binding site" evidence="1">
    <location>
        <begin position="286"/>
        <end position="287"/>
    </location>
    <ligand>
        <name>NAD(+)</name>
        <dbReference type="ChEBI" id="CHEBI:57540"/>
    </ligand>
</feature>
<feature type="site" description="Important for catalytic activity for the proton relay mechanism but does not participate directly in the coordination of zinc atom" evidence="1">
    <location>
        <position position="148"/>
    </location>
</feature>
<protein>
    <recommendedName>
        <fullName evidence="1">L-threonine 3-dehydrogenase</fullName>
        <shortName evidence="1">TDH</shortName>
        <ecNumber evidence="1">1.1.1.103</ecNumber>
    </recommendedName>
</protein>
<keyword id="KW-0963">Cytoplasm</keyword>
<keyword id="KW-0479">Metal-binding</keyword>
<keyword id="KW-0520">NAD</keyword>
<keyword id="KW-0560">Oxidoreductase</keyword>
<keyword id="KW-1185">Reference proteome</keyword>
<keyword id="KW-0862">Zinc</keyword>
<sequence length="343" mass="36838">MRALVKTSPAPGLELTELPDPTPGANDIVVQVFRTGICGTDLHIDSWDEWAARTVPTPLVIGHEFAGEVVAVGSAVTQAQVGDFVSGEGHLVCGTCRNCRAGRRHLCANTRGLGVHHNGAFAEYAVLPEQNVWVHREHVDPDVAAIFDPFGNAVHTALTFPVVGEDVLITGAGPIGLMAACVARHAGARNVVITDVSEHRLELARRVGVDLAVNVAETGIADAQAKLGMSEGFDVAMEVSGQPSALRETIENMAHGGRIAMLGLPAERFQIDWSAVVLKMLTVKGIYGREMFETWYSMSVLLQSGLDLSPVITHRFPCTRHVEAFETARAGRCGKVILDWTVR</sequence>
<reference key="1">
    <citation type="journal article" date="2007" name="Nat. Biotechnol.">
        <title>Complete genome sequence of the erythromycin-producing bacterium Saccharopolyspora erythraea NRRL23338.</title>
        <authorList>
            <person name="Oliynyk M."/>
            <person name="Samborskyy M."/>
            <person name="Lester J.B."/>
            <person name="Mironenko T."/>
            <person name="Scott N."/>
            <person name="Dickens S."/>
            <person name="Haydock S.F."/>
            <person name="Leadlay P.F."/>
        </authorList>
    </citation>
    <scope>NUCLEOTIDE SEQUENCE [LARGE SCALE GENOMIC DNA]</scope>
    <source>
        <strain>ATCC 11635 / DSM 40517 / JCM 4748 / NBRC 13426 / NCIMB 8594 / NRRL 2338</strain>
    </source>
</reference>
<accession>A4FND4</accession>
<gene>
    <name evidence="1" type="primary">tdh</name>
    <name type="ordered locus">SACE_6389</name>
</gene>
<name>TDH_SACEN</name>
<comment type="function">
    <text evidence="1">Catalyzes the NAD(+)-dependent oxidation of L-threonine to 2-amino-3-ketobutyrate.</text>
</comment>
<comment type="catalytic activity">
    <reaction evidence="1">
        <text>L-threonine + NAD(+) = (2S)-2-amino-3-oxobutanoate + NADH + H(+)</text>
        <dbReference type="Rhea" id="RHEA:13161"/>
        <dbReference type="ChEBI" id="CHEBI:15378"/>
        <dbReference type="ChEBI" id="CHEBI:57540"/>
        <dbReference type="ChEBI" id="CHEBI:57926"/>
        <dbReference type="ChEBI" id="CHEBI:57945"/>
        <dbReference type="ChEBI" id="CHEBI:78948"/>
        <dbReference type="EC" id="1.1.1.103"/>
    </reaction>
</comment>
<comment type="cofactor">
    <cofactor evidence="1">
        <name>Zn(2+)</name>
        <dbReference type="ChEBI" id="CHEBI:29105"/>
    </cofactor>
    <text evidence="1">Binds 2 Zn(2+) ions per subunit.</text>
</comment>
<comment type="pathway">
    <text evidence="1">Amino-acid degradation; L-threonine degradation via oxydo-reductase pathway; glycine from L-threonine: step 1/2.</text>
</comment>
<comment type="subunit">
    <text evidence="1">Homotetramer.</text>
</comment>
<comment type="subcellular location">
    <subcellularLocation>
        <location evidence="1">Cytoplasm</location>
    </subcellularLocation>
</comment>
<comment type="similarity">
    <text evidence="1">Belongs to the zinc-containing alcohol dehydrogenase family.</text>
</comment>